<name>RL14_UREPA</name>
<dbReference type="EMBL" id="AF222894">
    <property type="protein sequence ID" value="AAF30650.1"/>
    <property type="molecule type" value="Genomic_DNA"/>
</dbReference>
<dbReference type="RefSeq" id="WP_004026223.1">
    <property type="nucleotide sequence ID" value="NC_002162.1"/>
</dbReference>
<dbReference type="SMR" id="Q9PQQ0"/>
<dbReference type="STRING" id="273119.UU241"/>
<dbReference type="EnsemblBacteria" id="AAF30650">
    <property type="protein sequence ID" value="AAF30650"/>
    <property type="gene ID" value="UU241"/>
</dbReference>
<dbReference type="GeneID" id="93848716"/>
<dbReference type="KEGG" id="uur:UU241"/>
<dbReference type="eggNOG" id="COG0093">
    <property type="taxonomic scope" value="Bacteria"/>
</dbReference>
<dbReference type="HOGENOM" id="CLU_095071_2_1_14"/>
<dbReference type="OrthoDB" id="9806379at2"/>
<dbReference type="Proteomes" id="UP000000423">
    <property type="component" value="Chromosome"/>
</dbReference>
<dbReference type="GO" id="GO:0022625">
    <property type="term" value="C:cytosolic large ribosomal subunit"/>
    <property type="evidence" value="ECO:0007669"/>
    <property type="project" value="TreeGrafter"/>
</dbReference>
<dbReference type="GO" id="GO:0070180">
    <property type="term" value="F:large ribosomal subunit rRNA binding"/>
    <property type="evidence" value="ECO:0007669"/>
    <property type="project" value="TreeGrafter"/>
</dbReference>
<dbReference type="GO" id="GO:0003735">
    <property type="term" value="F:structural constituent of ribosome"/>
    <property type="evidence" value="ECO:0007669"/>
    <property type="project" value="InterPro"/>
</dbReference>
<dbReference type="GO" id="GO:0006412">
    <property type="term" value="P:translation"/>
    <property type="evidence" value="ECO:0007669"/>
    <property type="project" value="UniProtKB-UniRule"/>
</dbReference>
<dbReference type="CDD" id="cd00337">
    <property type="entry name" value="Ribosomal_uL14"/>
    <property type="match status" value="1"/>
</dbReference>
<dbReference type="FunFam" id="2.40.150.20:FF:000001">
    <property type="entry name" value="50S ribosomal protein L14"/>
    <property type="match status" value="1"/>
</dbReference>
<dbReference type="Gene3D" id="2.40.150.20">
    <property type="entry name" value="Ribosomal protein L14"/>
    <property type="match status" value="1"/>
</dbReference>
<dbReference type="HAMAP" id="MF_01367">
    <property type="entry name" value="Ribosomal_uL14"/>
    <property type="match status" value="1"/>
</dbReference>
<dbReference type="InterPro" id="IPR000218">
    <property type="entry name" value="Ribosomal_uL14"/>
</dbReference>
<dbReference type="InterPro" id="IPR005745">
    <property type="entry name" value="Ribosomal_uL14_bac-type"/>
</dbReference>
<dbReference type="InterPro" id="IPR019972">
    <property type="entry name" value="Ribosomal_uL14_CS"/>
</dbReference>
<dbReference type="InterPro" id="IPR036853">
    <property type="entry name" value="Ribosomal_uL14_sf"/>
</dbReference>
<dbReference type="NCBIfam" id="TIGR01067">
    <property type="entry name" value="rplN_bact"/>
    <property type="match status" value="1"/>
</dbReference>
<dbReference type="PANTHER" id="PTHR11761">
    <property type="entry name" value="50S/60S RIBOSOMAL PROTEIN L14/L23"/>
    <property type="match status" value="1"/>
</dbReference>
<dbReference type="PANTHER" id="PTHR11761:SF3">
    <property type="entry name" value="LARGE RIBOSOMAL SUBUNIT PROTEIN UL14M"/>
    <property type="match status" value="1"/>
</dbReference>
<dbReference type="Pfam" id="PF00238">
    <property type="entry name" value="Ribosomal_L14"/>
    <property type="match status" value="1"/>
</dbReference>
<dbReference type="SMART" id="SM01374">
    <property type="entry name" value="Ribosomal_L14"/>
    <property type="match status" value="1"/>
</dbReference>
<dbReference type="SUPFAM" id="SSF50193">
    <property type="entry name" value="Ribosomal protein L14"/>
    <property type="match status" value="1"/>
</dbReference>
<dbReference type="PROSITE" id="PS00049">
    <property type="entry name" value="RIBOSOMAL_L14"/>
    <property type="match status" value="1"/>
</dbReference>
<accession>Q9PQQ0</accession>
<sequence>MIQHMTRLKVADNTGAKEVGVIKVLGGSKKRYASVGDIVVVSVKKATPAGLIAKGQMAKAVIVRTKKSIRRESGLLIRFDENACVLIKEDKTPRGSRIFGPVAREIRDRGYTKIASLAPEVL</sequence>
<feature type="chain" id="PRO_1000055748" description="Large ribosomal subunit protein uL14">
    <location>
        <begin position="1"/>
        <end position="122"/>
    </location>
</feature>
<evidence type="ECO:0000255" key="1">
    <source>
        <dbReference type="HAMAP-Rule" id="MF_01367"/>
    </source>
</evidence>
<evidence type="ECO:0000305" key="2"/>
<proteinExistence type="inferred from homology"/>
<comment type="function">
    <text evidence="1">Binds to 23S rRNA. Forms part of two intersubunit bridges in the 70S ribosome.</text>
</comment>
<comment type="subunit">
    <text evidence="1">Part of the 50S ribosomal subunit. Forms a cluster with proteins L3 and L19. In the 70S ribosome, L14 and L19 interact and together make contacts with the 16S rRNA in bridges B5 and B8.</text>
</comment>
<comment type="similarity">
    <text evidence="1">Belongs to the universal ribosomal protein uL14 family.</text>
</comment>
<reference key="1">
    <citation type="journal article" date="2000" name="Nature">
        <title>The complete sequence of the mucosal pathogen Ureaplasma urealyticum.</title>
        <authorList>
            <person name="Glass J.I."/>
            <person name="Lefkowitz E.J."/>
            <person name="Glass J.S."/>
            <person name="Heiner C.R."/>
            <person name="Chen E.Y."/>
            <person name="Cassell G.H."/>
        </authorList>
    </citation>
    <scope>NUCLEOTIDE SEQUENCE [LARGE SCALE GENOMIC DNA]</scope>
    <source>
        <strain>ATCC 700970</strain>
    </source>
</reference>
<protein>
    <recommendedName>
        <fullName evidence="1">Large ribosomal subunit protein uL14</fullName>
    </recommendedName>
    <alternativeName>
        <fullName evidence="2">50S ribosomal protein L14</fullName>
    </alternativeName>
</protein>
<keyword id="KW-1185">Reference proteome</keyword>
<keyword id="KW-0687">Ribonucleoprotein</keyword>
<keyword id="KW-0689">Ribosomal protein</keyword>
<keyword id="KW-0694">RNA-binding</keyword>
<keyword id="KW-0699">rRNA-binding</keyword>
<gene>
    <name evidence="1" type="primary">rplN</name>
    <name type="ordered locus">UU241</name>
</gene>
<organism>
    <name type="scientific">Ureaplasma parvum serovar 3 (strain ATCC 700970)</name>
    <dbReference type="NCBI Taxonomy" id="273119"/>
    <lineage>
        <taxon>Bacteria</taxon>
        <taxon>Bacillati</taxon>
        <taxon>Mycoplasmatota</taxon>
        <taxon>Mycoplasmoidales</taxon>
        <taxon>Mycoplasmoidaceae</taxon>
        <taxon>Ureaplasma</taxon>
    </lineage>
</organism>